<name>RL17_LACCB</name>
<accession>B3WAJ1</accession>
<feature type="chain" id="PRO_1000144438" description="Large ribosomal subunit protein bL17">
    <location>
        <begin position="1"/>
        <end position="127"/>
    </location>
</feature>
<dbReference type="EMBL" id="FM177140">
    <property type="protein sequence ID" value="CAQ67710.1"/>
    <property type="molecule type" value="Genomic_DNA"/>
</dbReference>
<dbReference type="SMR" id="B3WAJ1"/>
<dbReference type="KEGG" id="lcb:LCABL_26440"/>
<dbReference type="HOGENOM" id="CLU_074407_2_2_9"/>
<dbReference type="GO" id="GO:0022625">
    <property type="term" value="C:cytosolic large ribosomal subunit"/>
    <property type="evidence" value="ECO:0007669"/>
    <property type="project" value="TreeGrafter"/>
</dbReference>
<dbReference type="GO" id="GO:0003735">
    <property type="term" value="F:structural constituent of ribosome"/>
    <property type="evidence" value="ECO:0007669"/>
    <property type="project" value="InterPro"/>
</dbReference>
<dbReference type="GO" id="GO:0006412">
    <property type="term" value="P:translation"/>
    <property type="evidence" value="ECO:0007669"/>
    <property type="project" value="UniProtKB-UniRule"/>
</dbReference>
<dbReference type="FunFam" id="3.90.1030.10:FF:000002">
    <property type="entry name" value="50S ribosomal protein L17"/>
    <property type="match status" value="1"/>
</dbReference>
<dbReference type="Gene3D" id="3.90.1030.10">
    <property type="entry name" value="Ribosomal protein L17"/>
    <property type="match status" value="1"/>
</dbReference>
<dbReference type="HAMAP" id="MF_01368">
    <property type="entry name" value="Ribosomal_bL17"/>
    <property type="match status" value="1"/>
</dbReference>
<dbReference type="InterPro" id="IPR000456">
    <property type="entry name" value="Ribosomal_bL17"/>
</dbReference>
<dbReference type="InterPro" id="IPR047859">
    <property type="entry name" value="Ribosomal_bL17_CS"/>
</dbReference>
<dbReference type="InterPro" id="IPR036373">
    <property type="entry name" value="Ribosomal_bL17_sf"/>
</dbReference>
<dbReference type="NCBIfam" id="TIGR00059">
    <property type="entry name" value="L17"/>
    <property type="match status" value="1"/>
</dbReference>
<dbReference type="PANTHER" id="PTHR14413:SF16">
    <property type="entry name" value="LARGE RIBOSOMAL SUBUNIT PROTEIN BL17M"/>
    <property type="match status" value="1"/>
</dbReference>
<dbReference type="PANTHER" id="PTHR14413">
    <property type="entry name" value="RIBOSOMAL PROTEIN L17"/>
    <property type="match status" value="1"/>
</dbReference>
<dbReference type="Pfam" id="PF01196">
    <property type="entry name" value="Ribosomal_L17"/>
    <property type="match status" value="1"/>
</dbReference>
<dbReference type="SUPFAM" id="SSF64263">
    <property type="entry name" value="Prokaryotic ribosomal protein L17"/>
    <property type="match status" value="1"/>
</dbReference>
<dbReference type="PROSITE" id="PS01167">
    <property type="entry name" value="RIBOSOMAL_L17"/>
    <property type="match status" value="1"/>
</dbReference>
<sequence length="127" mass="14229">MSYRKLGRTSSQRKALLRDLTTDLLINERIVTTEARAKEVRSTAEKMITLGKRGDLHARRQAAAYVRNEIASVEEQDDNSVVVKSALQKLFSDLAPKYADRKGGYTRILKTAPRRGDGAPMVIIELV</sequence>
<reference key="1">
    <citation type="submission" date="2008-06" db="EMBL/GenBank/DDBJ databases">
        <title>Lactobacillus casei BL23 complete genome sequence.</title>
        <authorList>
            <person name="Maze A."/>
            <person name="Boel G."/>
            <person name="Bourand A."/>
            <person name="Loux V."/>
            <person name="Gibrat J.F."/>
            <person name="Zuniga M."/>
            <person name="Hartke A."/>
            <person name="Deutscher J."/>
        </authorList>
    </citation>
    <scope>NUCLEOTIDE SEQUENCE [LARGE SCALE GENOMIC DNA]</scope>
    <source>
        <strain>BL23</strain>
    </source>
</reference>
<gene>
    <name evidence="1" type="primary">rplQ</name>
    <name type="ordered locus">LCABL_26440</name>
</gene>
<keyword id="KW-0687">Ribonucleoprotein</keyword>
<keyword id="KW-0689">Ribosomal protein</keyword>
<organism>
    <name type="scientific">Lacticaseibacillus casei (strain BL23)</name>
    <name type="common">Lactobacillus casei</name>
    <dbReference type="NCBI Taxonomy" id="543734"/>
    <lineage>
        <taxon>Bacteria</taxon>
        <taxon>Bacillati</taxon>
        <taxon>Bacillota</taxon>
        <taxon>Bacilli</taxon>
        <taxon>Lactobacillales</taxon>
        <taxon>Lactobacillaceae</taxon>
        <taxon>Lacticaseibacillus</taxon>
    </lineage>
</organism>
<protein>
    <recommendedName>
        <fullName evidence="1">Large ribosomal subunit protein bL17</fullName>
    </recommendedName>
    <alternativeName>
        <fullName evidence="2">50S ribosomal protein L17</fullName>
    </alternativeName>
</protein>
<comment type="subunit">
    <text evidence="1">Part of the 50S ribosomal subunit. Contacts protein L32.</text>
</comment>
<comment type="similarity">
    <text evidence="1">Belongs to the bacterial ribosomal protein bL17 family.</text>
</comment>
<evidence type="ECO:0000255" key="1">
    <source>
        <dbReference type="HAMAP-Rule" id="MF_01368"/>
    </source>
</evidence>
<evidence type="ECO:0000305" key="2"/>
<proteinExistence type="inferred from homology"/>